<comment type="function">
    <text evidence="1">PPIases accelerate the folding of proteins. It catalyzes the cis-trans isomerization of proline imidic peptide bonds in oligopeptides (By similarity).</text>
</comment>
<comment type="catalytic activity">
    <reaction>
        <text>[protein]-peptidylproline (omega=180) = [protein]-peptidylproline (omega=0)</text>
        <dbReference type="Rhea" id="RHEA:16237"/>
        <dbReference type="Rhea" id="RHEA-COMP:10747"/>
        <dbReference type="Rhea" id="RHEA-COMP:10748"/>
        <dbReference type="ChEBI" id="CHEBI:83833"/>
        <dbReference type="ChEBI" id="CHEBI:83834"/>
        <dbReference type="EC" id="5.2.1.8"/>
    </reaction>
</comment>
<comment type="similarity">
    <text evidence="3">Belongs to the cyclophilin-type PPIase family.</text>
</comment>
<sequence length="163" mass="17621">MMDPIKTYEIKEEELAKTAYATIKTNKGNIALELFYKDAPQAVSNFVTLAKEGFYNGLNFHRVIAGFVAQGGCPYGTGTGGPGHRIKCEVAHNPNKHKRGSISMAHAGRDTGGSQFFLCFVDLPHLDGEHTVFGKITSAEGLSVLDKIKQGDIIESVVFSSSL</sequence>
<protein>
    <recommendedName>
        <fullName>Peptidyl-prolyl cis-trans isomerase</fullName>
        <shortName>PPIase</shortName>
        <ecNumber>5.2.1.8</ecNumber>
    </recommendedName>
    <alternativeName>
        <fullName>Rotamase</fullName>
    </alternativeName>
</protein>
<keyword id="KW-0413">Isomerase</keyword>
<keyword id="KW-1185">Reference proteome</keyword>
<keyword id="KW-0697">Rotamase</keyword>
<dbReference type="EC" id="5.2.1.8"/>
<dbReference type="EMBL" id="AE000511">
    <property type="protein sequence ID" value="AAD08479.1"/>
    <property type="molecule type" value="Genomic_DNA"/>
</dbReference>
<dbReference type="PIR" id="A64700">
    <property type="entry name" value="A64700"/>
</dbReference>
<dbReference type="RefSeq" id="NP_208232.1">
    <property type="nucleotide sequence ID" value="NC_000915.1"/>
</dbReference>
<dbReference type="SMR" id="O25982"/>
<dbReference type="FunCoup" id="O25982">
    <property type="interactions" value="309"/>
</dbReference>
<dbReference type="STRING" id="85962.HP_1441"/>
<dbReference type="PaxDb" id="85962-C694_07465"/>
<dbReference type="EnsemblBacteria" id="AAD08479">
    <property type="protein sequence ID" value="AAD08479"/>
    <property type="gene ID" value="HP_1441"/>
</dbReference>
<dbReference type="KEGG" id="hpy:HP_1441"/>
<dbReference type="PATRIC" id="fig|85962.8.peg.1513"/>
<dbReference type="eggNOG" id="COG0652">
    <property type="taxonomic scope" value="Bacteria"/>
</dbReference>
<dbReference type="InParanoid" id="O25982"/>
<dbReference type="OrthoDB" id="9807797at2"/>
<dbReference type="PhylomeDB" id="O25982"/>
<dbReference type="Proteomes" id="UP000000429">
    <property type="component" value="Chromosome"/>
</dbReference>
<dbReference type="GO" id="GO:0003755">
    <property type="term" value="F:peptidyl-prolyl cis-trans isomerase activity"/>
    <property type="evidence" value="ECO:0000318"/>
    <property type="project" value="GO_Central"/>
</dbReference>
<dbReference type="GO" id="GO:0006457">
    <property type="term" value="P:protein folding"/>
    <property type="evidence" value="ECO:0000318"/>
    <property type="project" value="GO_Central"/>
</dbReference>
<dbReference type="CDD" id="cd00317">
    <property type="entry name" value="cyclophilin"/>
    <property type="match status" value="1"/>
</dbReference>
<dbReference type="Gene3D" id="2.40.100.10">
    <property type="entry name" value="Cyclophilin-like"/>
    <property type="match status" value="1"/>
</dbReference>
<dbReference type="InterPro" id="IPR029000">
    <property type="entry name" value="Cyclophilin-like_dom_sf"/>
</dbReference>
<dbReference type="InterPro" id="IPR024936">
    <property type="entry name" value="Cyclophilin-type_PPIase"/>
</dbReference>
<dbReference type="InterPro" id="IPR020892">
    <property type="entry name" value="Cyclophilin-type_PPIase_CS"/>
</dbReference>
<dbReference type="InterPro" id="IPR002130">
    <property type="entry name" value="Cyclophilin-type_PPIase_dom"/>
</dbReference>
<dbReference type="InterPro" id="IPR044666">
    <property type="entry name" value="Cyclophilin_A-like"/>
</dbReference>
<dbReference type="PANTHER" id="PTHR45625">
    <property type="entry name" value="PEPTIDYL-PROLYL CIS-TRANS ISOMERASE-RELATED"/>
    <property type="match status" value="1"/>
</dbReference>
<dbReference type="PANTHER" id="PTHR45625:SF4">
    <property type="entry name" value="PEPTIDYLPROLYL ISOMERASE DOMAIN AND WD REPEAT-CONTAINING PROTEIN 1"/>
    <property type="match status" value="1"/>
</dbReference>
<dbReference type="Pfam" id="PF00160">
    <property type="entry name" value="Pro_isomerase"/>
    <property type="match status" value="1"/>
</dbReference>
<dbReference type="PIRSF" id="PIRSF001467">
    <property type="entry name" value="Peptidylpro_ismrse"/>
    <property type="match status" value="1"/>
</dbReference>
<dbReference type="PRINTS" id="PR00153">
    <property type="entry name" value="CSAPPISMRASE"/>
</dbReference>
<dbReference type="SUPFAM" id="SSF50891">
    <property type="entry name" value="Cyclophilin-like"/>
    <property type="match status" value="1"/>
</dbReference>
<dbReference type="PROSITE" id="PS00170">
    <property type="entry name" value="CSA_PPIASE_1"/>
    <property type="match status" value="1"/>
</dbReference>
<dbReference type="PROSITE" id="PS50072">
    <property type="entry name" value="CSA_PPIASE_2"/>
    <property type="match status" value="1"/>
</dbReference>
<feature type="chain" id="PRO_0000064199" description="Peptidyl-prolyl cis-trans isomerase">
    <location>
        <begin position="1"/>
        <end position="163"/>
    </location>
</feature>
<feature type="domain" description="PPIase cyclophilin-type" evidence="2">
    <location>
        <begin position="17"/>
        <end position="163"/>
    </location>
</feature>
<gene>
    <name type="primary">ppiA</name>
    <name type="ordered locus">HP_1441</name>
</gene>
<name>PPIA_HELPY</name>
<organism>
    <name type="scientific">Helicobacter pylori (strain ATCC 700392 / 26695)</name>
    <name type="common">Campylobacter pylori</name>
    <dbReference type="NCBI Taxonomy" id="85962"/>
    <lineage>
        <taxon>Bacteria</taxon>
        <taxon>Pseudomonadati</taxon>
        <taxon>Campylobacterota</taxon>
        <taxon>Epsilonproteobacteria</taxon>
        <taxon>Campylobacterales</taxon>
        <taxon>Helicobacteraceae</taxon>
        <taxon>Helicobacter</taxon>
    </lineage>
</organism>
<accession>O25982</accession>
<proteinExistence type="inferred from homology"/>
<evidence type="ECO:0000250" key="1"/>
<evidence type="ECO:0000255" key="2">
    <source>
        <dbReference type="PROSITE-ProRule" id="PRU00156"/>
    </source>
</evidence>
<evidence type="ECO:0000305" key="3"/>
<reference key="1">
    <citation type="journal article" date="1997" name="Nature">
        <title>The complete genome sequence of the gastric pathogen Helicobacter pylori.</title>
        <authorList>
            <person name="Tomb J.-F."/>
            <person name="White O."/>
            <person name="Kerlavage A.R."/>
            <person name="Clayton R.A."/>
            <person name="Sutton G.G."/>
            <person name="Fleischmann R.D."/>
            <person name="Ketchum K.A."/>
            <person name="Klenk H.-P."/>
            <person name="Gill S.R."/>
            <person name="Dougherty B.A."/>
            <person name="Nelson K.E."/>
            <person name="Quackenbush J."/>
            <person name="Zhou L."/>
            <person name="Kirkness E.F."/>
            <person name="Peterson S.N."/>
            <person name="Loftus B.J."/>
            <person name="Richardson D.L."/>
            <person name="Dodson R.J."/>
            <person name="Khalak H.G."/>
            <person name="Glodek A."/>
            <person name="McKenney K."/>
            <person name="FitzGerald L.M."/>
            <person name="Lee N."/>
            <person name="Adams M.D."/>
            <person name="Hickey E.K."/>
            <person name="Berg D.E."/>
            <person name="Gocayne J.D."/>
            <person name="Utterback T.R."/>
            <person name="Peterson J.D."/>
            <person name="Kelley J.M."/>
            <person name="Cotton M.D."/>
            <person name="Weidman J.F."/>
            <person name="Fujii C."/>
            <person name="Bowman C."/>
            <person name="Watthey L."/>
            <person name="Wallin E."/>
            <person name="Hayes W.S."/>
            <person name="Borodovsky M."/>
            <person name="Karp P.D."/>
            <person name="Smith H.O."/>
            <person name="Fraser C.M."/>
            <person name="Venter J.C."/>
        </authorList>
    </citation>
    <scope>NUCLEOTIDE SEQUENCE [LARGE SCALE GENOMIC DNA]</scope>
    <source>
        <strain>ATCC 700392 / 26695</strain>
    </source>
</reference>